<reference key="1">
    <citation type="journal article" date="2005" name="BMC Genomics">
        <title>Characterization of 954 bovine full-CDS cDNA sequences.</title>
        <authorList>
            <person name="Harhay G.P."/>
            <person name="Sonstegard T.S."/>
            <person name="Keele J.W."/>
            <person name="Heaton M.P."/>
            <person name="Clawson M.L."/>
            <person name="Snelling W.M."/>
            <person name="Wiedmann R.T."/>
            <person name="Van Tassell C.P."/>
            <person name="Smith T.P.L."/>
        </authorList>
    </citation>
    <scope>NUCLEOTIDE SEQUENCE [LARGE SCALE MRNA]</scope>
</reference>
<reference key="2">
    <citation type="submission" date="2006-06" db="EMBL/GenBank/DDBJ databases">
        <authorList>
            <consortium name="NIH - Mammalian Gene Collection (MGC) project"/>
        </authorList>
    </citation>
    <scope>NUCLEOTIDE SEQUENCE [LARGE SCALE MRNA]</scope>
    <source>
        <strain>Hereford</strain>
        <tissue>Brain cortex</tissue>
    </source>
</reference>
<evidence type="ECO:0000255" key="1"/>
<evidence type="ECO:0000305" key="2"/>
<sequence length="215" mass="24328">MASETEKTHALLQSCSTESLLSSLGLGLFCTVADRLLQFPIIQQNAWLRALSDNSVHCVIGMWSWAIVIGIRKKTDFGEIILAGFLASVIDIDHFLLSGSLSLKAALSLPRRPFLHCSTVIPTVVLTLKFTMHFFKLKDSWCFLPWMLFISWTSHHIRDGIRHGLWMCPFGKTSPLPFWLYVIITSSLPHICSFVMYFTGTRQMMSSKHGIHIDV</sequence>
<organism>
    <name type="scientific">Bos taurus</name>
    <name type="common">Bovine</name>
    <dbReference type="NCBI Taxonomy" id="9913"/>
    <lineage>
        <taxon>Eukaryota</taxon>
        <taxon>Metazoa</taxon>
        <taxon>Chordata</taxon>
        <taxon>Craniata</taxon>
        <taxon>Vertebrata</taxon>
        <taxon>Euteleostomi</taxon>
        <taxon>Mammalia</taxon>
        <taxon>Eutheria</taxon>
        <taxon>Laurasiatheria</taxon>
        <taxon>Artiodactyla</taxon>
        <taxon>Ruminantia</taxon>
        <taxon>Pecora</taxon>
        <taxon>Bovidae</taxon>
        <taxon>Bovinae</taxon>
        <taxon>Bos</taxon>
    </lineage>
</organism>
<proteinExistence type="evidence at transcript level"/>
<comment type="subcellular location">
    <subcellularLocation>
        <location evidence="2">Membrane</location>
        <topology evidence="2">Multi-pass membrane protein</topology>
    </subcellularLocation>
</comment>
<keyword id="KW-0472">Membrane</keyword>
<keyword id="KW-1185">Reference proteome</keyword>
<keyword id="KW-0812">Transmembrane</keyword>
<keyword id="KW-1133">Transmembrane helix</keyword>
<feature type="chain" id="PRO_0000281920" description="Transmembrane protein 267">
    <location>
        <begin position="1"/>
        <end position="215"/>
    </location>
</feature>
<feature type="transmembrane region" description="Helical" evidence="1">
    <location>
        <begin position="77"/>
        <end position="97"/>
    </location>
</feature>
<feature type="transmembrane region" description="Helical" evidence="1">
    <location>
        <begin position="114"/>
        <end position="134"/>
    </location>
</feature>
<feature type="transmembrane region" description="Helical" evidence="1">
    <location>
        <begin position="178"/>
        <end position="198"/>
    </location>
</feature>
<name>TM267_BOVIN</name>
<accession>Q17QJ2</accession>
<gene>
    <name type="primary">TMEM267</name>
</gene>
<dbReference type="EMBL" id="BT026226">
    <property type="protein sequence ID" value="ABG67065.1"/>
    <property type="molecule type" value="mRNA"/>
</dbReference>
<dbReference type="EMBL" id="BC118330">
    <property type="protein sequence ID" value="AAI18331.1"/>
    <property type="molecule type" value="mRNA"/>
</dbReference>
<dbReference type="RefSeq" id="NP_001073263.1">
    <property type="nucleotide sequence ID" value="NM_001079795.1"/>
</dbReference>
<dbReference type="RefSeq" id="XP_005221615.1">
    <property type="nucleotide sequence ID" value="XM_005221558.5"/>
</dbReference>
<dbReference type="RefSeq" id="XP_005221616.1">
    <property type="nucleotide sequence ID" value="XM_005221559.3"/>
</dbReference>
<dbReference type="FunCoup" id="Q17QJ2">
    <property type="interactions" value="980"/>
</dbReference>
<dbReference type="STRING" id="9913.ENSBTAP00000001909"/>
<dbReference type="PaxDb" id="9913-ENSBTAP00000044410"/>
<dbReference type="Ensembl" id="ENSBTAT00000047186.3">
    <property type="protein sequence ID" value="ENSBTAP00000044410.1"/>
    <property type="gene ID" value="ENSBTAG00000001457.5"/>
</dbReference>
<dbReference type="GeneID" id="780867"/>
<dbReference type="KEGG" id="bta:780867"/>
<dbReference type="CTD" id="64417"/>
<dbReference type="VEuPathDB" id="HostDB:ENSBTAG00000001457"/>
<dbReference type="VGNC" id="VGNC:36072">
    <property type="gene designation" value="TMEM267"/>
</dbReference>
<dbReference type="eggNOG" id="ENOG502QQ1U">
    <property type="taxonomic scope" value="Eukaryota"/>
</dbReference>
<dbReference type="GeneTree" id="ENSGT00390000003050"/>
<dbReference type="HOGENOM" id="CLU_074966_1_0_1"/>
<dbReference type="InParanoid" id="Q17QJ2"/>
<dbReference type="OMA" id="FYICTAC"/>
<dbReference type="OrthoDB" id="10014558at2759"/>
<dbReference type="TreeFam" id="TF323520"/>
<dbReference type="Proteomes" id="UP000009136">
    <property type="component" value="Chromosome 20"/>
</dbReference>
<dbReference type="Bgee" id="ENSBTAG00000001457">
    <property type="expression patterns" value="Expressed in oocyte and 103 other cell types or tissues"/>
</dbReference>
<dbReference type="GO" id="GO:0016020">
    <property type="term" value="C:membrane"/>
    <property type="evidence" value="ECO:0007669"/>
    <property type="project" value="UniProtKB-SubCell"/>
</dbReference>
<dbReference type="InterPro" id="IPR026572">
    <property type="entry name" value="TMEM267"/>
</dbReference>
<dbReference type="PANTHER" id="PTHR13628">
    <property type="entry name" value="TRANSMEMBRANE PROTEIN 267"/>
    <property type="match status" value="1"/>
</dbReference>
<dbReference type="PANTHER" id="PTHR13628:SF1">
    <property type="entry name" value="TRANSMEMBRANE PROTEIN 267"/>
    <property type="match status" value="1"/>
</dbReference>
<protein>
    <recommendedName>
        <fullName>Transmembrane protein 267</fullName>
    </recommendedName>
</protein>